<evidence type="ECO:0000250" key="1"/>
<evidence type="ECO:0000255" key="2">
    <source>
        <dbReference type="PROSITE-ProRule" id="PRU00660"/>
    </source>
</evidence>
<evidence type="ECO:0000305" key="3"/>
<dbReference type="EC" id="1.5.1.3"/>
<dbReference type="EMBL" id="AE016826">
    <property type="protein sequence ID" value="AAO26867.1"/>
    <property type="molecule type" value="Genomic_DNA"/>
</dbReference>
<dbReference type="RefSeq" id="WP_011091268.1">
    <property type="nucleotide sequence ID" value="NC_004545.1"/>
</dbReference>
<dbReference type="SMR" id="Q89AV2"/>
<dbReference type="STRING" id="224915.bbp_133"/>
<dbReference type="KEGG" id="bab:bbp_133"/>
<dbReference type="eggNOG" id="COG0262">
    <property type="taxonomic scope" value="Bacteria"/>
</dbReference>
<dbReference type="HOGENOM" id="CLU_043966_5_1_6"/>
<dbReference type="OrthoDB" id="9804315at2"/>
<dbReference type="UniPathway" id="UPA00077">
    <property type="reaction ID" value="UER00158"/>
</dbReference>
<dbReference type="Proteomes" id="UP000000601">
    <property type="component" value="Chromosome"/>
</dbReference>
<dbReference type="GO" id="GO:0005829">
    <property type="term" value="C:cytosol"/>
    <property type="evidence" value="ECO:0007669"/>
    <property type="project" value="TreeGrafter"/>
</dbReference>
<dbReference type="GO" id="GO:0004146">
    <property type="term" value="F:dihydrofolate reductase activity"/>
    <property type="evidence" value="ECO:0007669"/>
    <property type="project" value="UniProtKB-EC"/>
</dbReference>
<dbReference type="GO" id="GO:0050661">
    <property type="term" value="F:NADP binding"/>
    <property type="evidence" value="ECO:0007669"/>
    <property type="project" value="InterPro"/>
</dbReference>
<dbReference type="GO" id="GO:0046452">
    <property type="term" value="P:dihydrofolate metabolic process"/>
    <property type="evidence" value="ECO:0007669"/>
    <property type="project" value="TreeGrafter"/>
</dbReference>
<dbReference type="GO" id="GO:0046655">
    <property type="term" value="P:folic acid metabolic process"/>
    <property type="evidence" value="ECO:0007669"/>
    <property type="project" value="TreeGrafter"/>
</dbReference>
<dbReference type="GO" id="GO:0006730">
    <property type="term" value="P:one-carbon metabolic process"/>
    <property type="evidence" value="ECO:0007669"/>
    <property type="project" value="UniProtKB-KW"/>
</dbReference>
<dbReference type="GO" id="GO:0046654">
    <property type="term" value="P:tetrahydrofolate biosynthetic process"/>
    <property type="evidence" value="ECO:0007669"/>
    <property type="project" value="UniProtKB-UniPathway"/>
</dbReference>
<dbReference type="CDD" id="cd00209">
    <property type="entry name" value="DHFR"/>
    <property type="match status" value="1"/>
</dbReference>
<dbReference type="FunFam" id="3.40.430.10:FF:000001">
    <property type="entry name" value="Dihydrofolate reductase"/>
    <property type="match status" value="1"/>
</dbReference>
<dbReference type="Gene3D" id="3.40.430.10">
    <property type="entry name" value="Dihydrofolate Reductase, subunit A"/>
    <property type="match status" value="1"/>
</dbReference>
<dbReference type="InterPro" id="IPR012259">
    <property type="entry name" value="DHFR"/>
</dbReference>
<dbReference type="InterPro" id="IPR024072">
    <property type="entry name" value="DHFR-like_dom_sf"/>
</dbReference>
<dbReference type="InterPro" id="IPR017925">
    <property type="entry name" value="DHFR_CS"/>
</dbReference>
<dbReference type="InterPro" id="IPR001796">
    <property type="entry name" value="DHFR_dom"/>
</dbReference>
<dbReference type="NCBIfam" id="NF008037">
    <property type="entry name" value="PRK10769.1"/>
    <property type="match status" value="1"/>
</dbReference>
<dbReference type="PANTHER" id="PTHR48069">
    <property type="entry name" value="DIHYDROFOLATE REDUCTASE"/>
    <property type="match status" value="1"/>
</dbReference>
<dbReference type="PANTHER" id="PTHR48069:SF3">
    <property type="entry name" value="DIHYDROFOLATE REDUCTASE"/>
    <property type="match status" value="1"/>
</dbReference>
<dbReference type="Pfam" id="PF00186">
    <property type="entry name" value="DHFR_1"/>
    <property type="match status" value="1"/>
</dbReference>
<dbReference type="PIRSF" id="PIRSF000194">
    <property type="entry name" value="DHFR"/>
    <property type="match status" value="1"/>
</dbReference>
<dbReference type="PRINTS" id="PR00070">
    <property type="entry name" value="DHFR"/>
</dbReference>
<dbReference type="SUPFAM" id="SSF53597">
    <property type="entry name" value="Dihydrofolate reductase-like"/>
    <property type="match status" value="1"/>
</dbReference>
<dbReference type="PROSITE" id="PS00075">
    <property type="entry name" value="DHFR_1"/>
    <property type="match status" value="1"/>
</dbReference>
<dbReference type="PROSITE" id="PS51330">
    <property type="entry name" value="DHFR_2"/>
    <property type="match status" value="1"/>
</dbReference>
<keyword id="KW-0521">NADP</keyword>
<keyword id="KW-0554">One-carbon metabolism</keyword>
<keyword id="KW-0560">Oxidoreductase</keyword>
<keyword id="KW-1185">Reference proteome</keyword>
<proteinExistence type="inferred from homology"/>
<name>DYR_BUCBP</name>
<comment type="function">
    <text evidence="1">Key enzyme in folate metabolism. Catalyzes an essential reaction for de novo glycine and purine synthesis, and for DNA precursor synthesis (By similarity).</text>
</comment>
<comment type="catalytic activity">
    <reaction evidence="2">
        <text>(6S)-5,6,7,8-tetrahydrofolate + NADP(+) = 7,8-dihydrofolate + NADPH + H(+)</text>
        <dbReference type="Rhea" id="RHEA:15009"/>
        <dbReference type="ChEBI" id="CHEBI:15378"/>
        <dbReference type="ChEBI" id="CHEBI:57451"/>
        <dbReference type="ChEBI" id="CHEBI:57453"/>
        <dbReference type="ChEBI" id="CHEBI:57783"/>
        <dbReference type="ChEBI" id="CHEBI:58349"/>
        <dbReference type="EC" id="1.5.1.3"/>
    </reaction>
</comment>
<comment type="pathway">
    <text>Cofactor biosynthesis; tetrahydrofolate biosynthesis; 5,6,7,8-tetrahydrofolate from 7,8-dihydrofolate: step 1/1.</text>
</comment>
<comment type="similarity">
    <text evidence="3">Belongs to the dihydrofolate reductase family.</text>
</comment>
<protein>
    <recommendedName>
        <fullName>Dihydrofolate reductase</fullName>
        <ecNumber>1.5.1.3</ecNumber>
    </recommendedName>
</protein>
<feature type="chain" id="PRO_0000186385" description="Dihydrofolate reductase">
    <location>
        <begin position="1"/>
        <end position="164"/>
    </location>
</feature>
<feature type="domain" description="DHFR" evidence="2">
    <location>
        <begin position="2"/>
        <end position="162"/>
    </location>
</feature>
<feature type="binding site" evidence="1">
    <location>
        <begin position="6"/>
        <end position="8"/>
    </location>
    <ligand>
        <name>substrate</name>
    </ligand>
</feature>
<feature type="binding site" evidence="1">
    <location>
        <begin position="7"/>
        <end position="8"/>
    </location>
    <ligand>
        <name>NADP(+)</name>
        <dbReference type="ChEBI" id="CHEBI:58349"/>
    </ligand>
</feature>
<feature type="binding site" evidence="1">
    <location>
        <begin position="15"/>
        <end position="20"/>
    </location>
    <ligand>
        <name>NADP(+)</name>
        <dbReference type="ChEBI" id="CHEBI:58349"/>
    </ligand>
</feature>
<feature type="binding site" evidence="1">
    <location>
        <position position="28"/>
    </location>
    <ligand>
        <name>substrate</name>
    </ligand>
</feature>
<feature type="binding site" evidence="1">
    <location>
        <begin position="44"/>
        <end position="47"/>
    </location>
    <ligand>
        <name>NADP(+)</name>
        <dbReference type="ChEBI" id="CHEBI:58349"/>
    </ligand>
</feature>
<feature type="binding site" evidence="1">
    <location>
        <position position="58"/>
    </location>
    <ligand>
        <name>substrate</name>
    </ligand>
</feature>
<feature type="binding site" evidence="1">
    <location>
        <begin position="63"/>
        <end position="66"/>
    </location>
    <ligand>
        <name>NADP(+)</name>
        <dbReference type="ChEBI" id="CHEBI:58349"/>
    </ligand>
</feature>
<feature type="binding site" evidence="1">
    <location>
        <begin position="96"/>
        <end position="101"/>
    </location>
    <ligand>
        <name>NADP(+)</name>
        <dbReference type="ChEBI" id="CHEBI:58349"/>
    </ligand>
</feature>
<feature type="binding site" evidence="1">
    <location>
        <position position="115"/>
    </location>
    <ligand>
        <name>substrate</name>
    </ligand>
</feature>
<accession>Q89AV2</accession>
<reference key="1">
    <citation type="journal article" date="2003" name="Proc. Natl. Acad. Sci. U.S.A.">
        <title>Reductive genome evolution in Buchnera aphidicola.</title>
        <authorList>
            <person name="van Ham R.C.H.J."/>
            <person name="Kamerbeek J."/>
            <person name="Palacios C."/>
            <person name="Rausell C."/>
            <person name="Abascal F."/>
            <person name="Bastolla U."/>
            <person name="Fernandez J.M."/>
            <person name="Jimenez L."/>
            <person name="Postigo M."/>
            <person name="Silva F.J."/>
            <person name="Tamames J."/>
            <person name="Viguera E."/>
            <person name="Latorre A."/>
            <person name="Valencia A."/>
            <person name="Moran F."/>
            <person name="Moya A."/>
        </authorList>
    </citation>
    <scope>NUCLEOTIDE SEQUENCE [LARGE SCALE GENOMIC DNA]</scope>
    <source>
        <strain>Bp</strain>
    </source>
</reference>
<organism>
    <name type="scientific">Buchnera aphidicola subsp. Baizongia pistaciae (strain Bp)</name>
    <dbReference type="NCBI Taxonomy" id="224915"/>
    <lineage>
        <taxon>Bacteria</taxon>
        <taxon>Pseudomonadati</taxon>
        <taxon>Pseudomonadota</taxon>
        <taxon>Gammaproteobacteria</taxon>
        <taxon>Enterobacterales</taxon>
        <taxon>Erwiniaceae</taxon>
        <taxon>Buchnera</taxon>
    </lineage>
</organism>
<sequence>MNISIIVAMSQNLVIGQKNSIPWNIPKDLSWFKKHTIKKSIIMGRKTWESIGRVLPMRQNIVLTRQKNIKNTNVLFVNSISKAIQSALYKNEIMIIGGSNLYNQMLTSANKLYITHIEKYILGDTYFPTYDHLPWKIIFKKKIIEHEKTKNSFYVTFKILKKIT</sequence>
<gene>
    <name type="primary">folA</name>
    <name type="ordered locus">bbp_133</name>
</gene>